<proteinExistence type="inferred from homology"/>
<feature type="chain" id="PRO_1000001264" description="LexA repressor">
    <location>
        <begin position="1"/>
        <end position="240"/>
    </location>
</feature>
<feature type="DNA-binding region" description="H-T-H motif" evidence="1">
    <location>
        <begin position="26"/>
        <end position="46"/>
    </location>
</feature>
<feature type="active site" description="For autocatalytic cleavage activity" evidence="1">
    <location>
        <position position="161"/>
    </location>
</feature>
<feature type="active site" description="For autocatalytic cleavage activity" evidence="1">
    <location>
        <position position="199"/>
    </location>
</feature>
<feature type="site" description="Cleavage; by autolysis" evidence="1">
    <location>
        <begin position="126"/>
        <end position="127"/>
    </location>
</feature>
<accession>A5VQR8</accession>
<gene>
    <name evidence="1" type="primary">lexA</name>
    <name type="ordered locus">BOV_1104</name>
</gene>
<evidence type="ECO:0000255" key="1">
    <source>
        <dbReference type="HAMAP-Rule" id="MF_00015"/>
    </source>
</evidence>
<reference key="1">
    <citation type="journal article" date="2009" name="PLoS ONE">
        <title>Genome degradation in Brucella ovis corresponds with narrowing of its host range and tissue tropism.</title>
        <authorList>
            <person name="Tsolis R.M."/>
            <person name="Seshadri R."/>
            <person name="Santos R.L."/>
            <person name="Sangari F.J."/>
            <person name="Lobo J.M."/>
            <person name="de Jong M.F."/>
            <person name="Ren Q."/>
            <person name="Myers G."/>
            <person name="Brinkac L.M."/>
            <person name="Nelson W.C."/>
            <person name="Deboy R.T."/>
            <person name="Angiuoli S."/>
            <person name="Khouri H."/>
            <person name="Dimitrov G."/>
            <person name="Robinson J.R."/>
            <person name="Mulligan S."/>
            <person name="Walker R.L."/>
            <person name="Elzer P.E."/>
            <person name="Hassan K.A."/>
            <person name="Paulsen I.T."/>
        </authorList>
    </citation>
    <scope>NUCLEOTIDE SEQUENCE [LARGE SCALE GENOMIC DNA]</scope>
    <source>
        <strain>ATCC 25840 / 63/290 / NCTC 10512</strain>
    </source>
</reference>
<name>LEXA_BRUO2</name>
<dbReference type="EC" id="3.4.21.88" evidence="1"/>
<dbReference type="EMBL" id="CP000708">
    <property type="protein sequence ID" value="ABQ60182.1"/>
    <property type="molecule type" value="Genomic_DNA"/>
</dbReference>
<dbReference type="RefSeq" id="WP_002964272.1">
    <property type="nucleotide sequence ID" value="NC_009505.1"/>
</dbReference>
<dbReference type="SMR" id="A5VQR8"/>
<dbReference type="MEROPS" id="S24.001"/>
<dbReference type="GeneID" id="97533604"/>
<dbReference type="KEGG" id="bov:BOV_1104"/>
<dbReference type="HOGENOM" id="CLU_066192_45_2_5"/>
<dbReference type="PhylomeDB" id="A5VQR8"/>
<dbReference type="Proteomes" id="UP000006383">
    <property type="component" value="Chromosome I"/>
</dbReference>
<dbReference type="GO" id="GO:0003677">
    <property type="term" value="F:DNA binding"/>
    <property type="evidence" value="ECO:0007669"/>
    <property type="project" value="UniProtKB-UniRule"/>
</dbReference>
<dbReference type="GO" id="GO:0004252">
    <property type="term" value="F:serine-type endopeptidase activity"/>
    <property type="evidence" value="ECO:0007669"/>
    <property type="project" value="UniProtKB-UniRule"/>
</dbReference>
<dbReference type="GO" id="GO:0006281">
    <property type="term" value="P:DNA repair"/>
    <property type="evidence" value="ECO:0007669"/>
    <property type="project" value="UniProtKB-UniRule"/>
</dbReference>
<dbReference type="GO" id="GO:0006260">
    <property type="term" value="P:DNA replication"/>
    <property type="evidence" value="ECO:0007669"/>
    <property type="project" value="UniProtKB-UniRule"/>
</dbReference>
<dbReference type="GO" id="GO:0045892">
    <property type="term" value="P:negative regulation of DNA-templated transcription"/>
    <property type="evidence" value="ECO:0007669"/>
    <property type="project" value="UniProtKB-UniRule"/>
</dbReference>
<dbReference type="GO" id="GO:0006508">
    <property type="term" value="P:proteolysis"/>
    <property type="evidence" value="ECO:0007669"/>
    <property type="project" value="InterPro"/>
</dbReference>
<dbReference type="GO" id="GO:0009432">
    <property type="term" value="P:SOS response"/>
    <property type="evidence" value="ECO:0007669"/>
    <property type="project" value="UniProtKB-UniRule"/>
</dbReference>
<dbReference type="CDD" id="cd06529">
    <property type="entry name" value="S24_LexA-like"/>
    <property type="match status" value="1"/>
</dbReference>
<dbReference type="FunFam" id="1.10.10.10:FF:000102">
    <property type="entry name" value="LexA repressor"/>
    <property type="match status" value="1"/>
</dbReference>
<dbReference type="FunFam" id="2.10.109.10:FF:000001">
    <property type="entry name" value="LexA repressor"/>
    <property type="match status" value="1"/>
</dbReference>
<dbReference type="Gene3D" id="2.10.109.10">
    <property type="entry name" value="Umud Fragment, subunit A"/>
    <property type="match status" value="1"/>
</dbReference>
<dbReference type="Gene3D" id="1.10.10.10">
    <property type="entry name" value="Winged helix-like DNA-binding domain superfamily/Winged helix DNA-binding domain"/>
    <property type="match status" value="1"/>
</dbReference>
<dbReference type="HAMAP" id="MF_00015">
    <property type="entry name" value="LexA"/>
    <property type="match status" value="1"/>
</dbReference>
<dbReference type="InterPro" id="IPR006200">
    <property type="entry name" value="LexA"/>
</dbReference>
<dbReference type="InterPro" id="IPR039418">
    <property type="entry name" value="LexA-like"/>
</dbReference>
<dbReference type="InterPro" id="IPR036286">
    <property type="entry name" value="LexA/Signal_pep-like_sf"/>
</dbReference>
<dbReference type="InterPro" id="IPR006199">
    <property type="entry name" value="LexA_DNA-bd_dom"/>
</dbReference>
<dbReference type="InterPro" id="IPR050077">
    <property type="entry name" value="LexA_repressor"/>
</dbReference>
<dbReference type="InterPro" id="IPR006197">
    <property type="entry name" value="Peptidase_S24_LexA"/>
</dbReference>
<dbReference type="InterPro" id="IPR015927">
    <property type="entry name" value="Peptidase_S24_S26A/B/C"/>
</dbReference>
<dbReference type="InterPro" id="IPR036388">
    <property type="entry name" value="WH-like_DNA-bd_sf"/>
</dbReference>
<dbReference type="InterPro" id="IPR036390">
    <property type="entry name" value="WH_DNA-bd_sf"/>
</dbReference>
<dbReference type="NCBIfam" id="TIGR00498">
    <property type="entry name" value="lexA"/>
    <property type="match status" value="1"/>
</dbReference>
<dbReference type="PANTHER" id="PTHR33516">
    <property type="entry name" value="LEXA REPRESSOR"/>
    <property type="match status" value="1"/>
</dbReference>
<dbReference type="PANTHER" id="PTHR33516:SF2">
    <property type="entry name" value="LEXA REPRESSOR-RELATED"/>
    <property type="match status" value="1"/>
</dbReference>
<dbReference type="Pfam" id="PF01726">
    <property type="entry name" value="LexA_DNA_bind"/>
    <property type="match status" value="1"/>
</dbReference>
<dbReference type="Pfam" id="PF00717">
    <property type="entry name" value="Peptidase_S24"/>
    <property type="match status" value="1"/>
</dbReference>
<dbReference type="PRINTS" id="PR00726">
    <property type="entry name" value="LEXASERPTASE"/>
</dbReference>
<dbReference type="SUPFAM" id="SSF51306">
    <property type="entry name" value="LexA/Signal peptidase"/>
    <property type="match status" value="1"/>
</dbReference>
<dbReference type="SUPFAM" id="SSF46785">
    <property type="entry name" value="Winged helix' DNA-binding domain"/>
    <property type="match status" value="1"/>
</dbReference>
<protein>
    <recommendedName>
        <fullName evidence="1">LexA repressor</fullName>
        <ecNumber evidence="1">3.4.21.88</ecNumber>
    </recommendedName>
</protein>
<comment type="function">
    <text evidence="1">Represses a number of genes involved in the response to DNA damage (SOS response), including recA and lexA. In the presence of single-stranded DNA, RecA interacts with LexA causing an autocatalytic cleavage which disrupts the DNA-binding part of LexA, leading to derepression of the SOS regulon and eventually DNA repair.</text>
</comment>
<comment type="catalytic activity">
    <reaction evidence="1">
        <text>Hydrolysis of Ala-|-Gly bond in repressor LexA.</text>
        <dbReference type="EC" id="3.4.21.88"/>
    </reaction>
</comment>
<comment type="subunit">
    <text evidence="1">Homodimer.</text>
</comment>
<comment type="similarity">
    <text evidence="1">Belongs to the peptidase S24 family.</text>
</comment>
<keyword id="KW-0068">Autocatalytic cleavage</keyword>
<keyword id="KW-0227">DNA damage</keyword>
<keyword id="KW-0234">DNA repair</keyword>
<keyword id="KW-0235">DNA replication</keyword>
<keyword id="KW-0238">DNA-binding</keyword>
<keyword id="KW-0378">Hydrolase</keyword>
<keyword id="KW-0678">Repressor</keyword>
<keyword id="KW-0742">SOS response</keyword>
<keyword id="KW-0804">Transcription</keyword>
<keyword id="KW-0805">Transcription regulation</keyword>
<sequence length="240" mass="26070">MLTRKQHELLLFIHERLKETGIPPSFDEMKEALDLASKSGIHRLITALEERGFIRRLPNRARALEVLRLPDSIAPGLSPQKKFAPSVIEGSLGKVASVQPVRPAPAPQNSEAPATVSVPVMGRIAAGVPISAIQNQTHMLSLPPEMIGAGEHYALEVKGDSMIDAGIFDGDTVIIKRGDTANPGEIVVALVDEEEATLKRFRREGASIALEAANPAYETRIFGPDRVHVQGKLVGLIRRY</sequence>
<organism>
    <name type="scientific">Brucella ovis (strain ATCC 25840 / 63/290 / NCTC 10512)</name>
    <dbReference type="NCBI Taxonomy" id="444178"/>
    <lineage>
        <taxon>Bacteria</taxon>
        <taxon>Pseudomonadati</taxon>
        <taxon>Pseudomonadota</taxon>
        <taxon>Alphaproteobacteria</taxon>
        <taxon>Hyphomicrobiales</taxon>
        <taxon>Brucellaceae</taxon>
        <taxon>Brucella/Ochrobactrum group</taxon>
        <taxon>Brucella</taxon>
    </lineage>
</organism>